<dbReference type="EMBL" id="BX294146">
    <property type="protein sequence ID" value="CAD75602.1"/>
    <property type="molecule type" value="Genomic_DNA"/>
</dbReference>
<dbReference type="RefSeq" id="NP_868055.1">
    <property type="nucleotide sequence ID" value="NC_005027.1"/>
</dbReference>
<dbReference type="RefSeq" id="WP_011121603.1">
    <property type="nucleotide sequence ID" value="NC_005027.1"/>
</dbReference>
<dbReference type="SMR" id="Q7UN17"/>
<dbReference type="FunCoup" id="Q7UN17">
    <property type="interactions" value="662"/>
</dbReference>
<dbReference type="STRING" id="243090.RB7837"/>
<dbReference type="EnsemblBacteria" id="CAD75602">
    <property type="protein sequence ID" value="CAD75602"/>
    <property type="gene ID" value="RB7837"/>
</dbReference>
<dbReference type="KEGG" id="rba:RB7837"/>
<dbReference type="PATRIC" id="fig|243090.15.peg.3785"/>
<dbReference type="eggNOG" id="COG0090">
    <property type="taxonomic scope" value="Bacteria"/>
</dbReference>
<dbReference type="HOGENOM" id="CLU_036235_2_1_0"/>
<dbReference type="InParanoid" id="Q7UN17"/>
<dbReference type="OrthoDB" id="9778722at2"/>
<dbReference type="Proteomes" id="UP000001025">
    <property type="component" value="Chromosome"/>
</dbReference>
<dbReference type="GO" id="GO:0015934">
    <property type="term" value="C:large ribosomal subunit"/>
    <property type="evidence" value="ECO:0007669"/>
    <property type="project" value="InterPro"/>
</dbReference>
<dbReference type="GO" id="GO:0003723">
    <property type="term" value="F:RNA binding"/>
    <property type="evidence" value="ECO:0000318"/>
    <property type="project" value="GO_Central"/>
</dbReference>
<dbReference type="GO" id="GO:0019843">
    <property type="term" value="F:rRNA binding"/>
    <property type="evidence" value="ECO:0007669"/>
    <property type="project" value="UniProtKB-UniRule"/>
</dbReference>
<dbReference type="GO" id="GO:0003735">
    <property type="term" value="F:structural constituent of ribosome"/>
    <property type="evidence" value="ECO:0000318"/>
    <property type="project" value="GO_Central"/>
</dbReference>
<dbReference type="GO" id="GO:0016740">
    <property type="term" value="F:transferase activity"/>
    <property type="evidence" value="ECO:0007669"/>
    <property type="project" value="InterPro"/>
</dbReference>
<dbReference type="GO" id="GO:0002181">
    <property type="term" value="P:cytoplasmic translation"/>
    <property type="evidence" value="ECO:0000318"/>
    <property type="project" value="GO_Central"/>
</dbReference>
<dbReference type="FunFam" id="2.30.30.30:FF:000001">
    <property type="entry name" value="50S ribosomal protein L2"/>
    <property type="match status" value="1"/>
</dbReference>
<dbReference type="FunFam" id="2.40.50.140:FF:000003">
    <property type="entry name" value="50S ribosomal protein L2"/>
    <property type="match status" value="1"/>
</dbReference>
<dbReference type="FunFam" id="4.10.950.10:FF:000001">
    <property type="entry name" value="50S ribosomal protein L2"/>
    <property type="match status" value="1"/>
</dbReference>
<dbReference type="Gene3D" id="2.30.30.30">
    <property type="match status" value="1"/>
</dbReference>
<dbReference type="Gene3D" id="2.40.50.140">
    <property type="entry name" value="Nucleic acid-binding proteins"/>
    <property type="match status" value="1"/>
</dbReference>
<dbReference type="Gene3D" id="4.10.950.10">
    <property type="entry name" value="Ribosomal protein L2, domain 3"/>
    <property type="match status" value="1"/>
</dbReference>
<dbReference type="HAMAP" id="MF_01320_B">
    <property type="entry name" value="Ribosomal_uL2_B"/>
    <property type="match status" value="1"/>
</dbReference>
<dbReference type="InterPro" id="IPR012340">
    <property type="entry name" value="NA-bd_OB-fold"/>
</dbReference>
<dbReference type="InterPro" id="IPR014722">
    <property type="entry name" value="Rib_uL2_dom2"/>
</dbReference>
<dbReference type="InterPro" id="IPR002171">
    <property type="entry name" value="Ribosomal_uL2"/>
</dbReference>
<dbReference type="InterPro" id="IPR005880">
    <property type="entry name" value="Ribosomal_uL2_bac/org-type"/>
</dbReference>
<dbReference type="InterPro" id="IPR022669">
    <property type="entry name" value="Ribosomal_uL2_C"/>
</dbReference>
<dbReference type="InterPro" id="IPR022671">
    <property type="entry name" value="Ribosomal_uL2_CS"/>
</dbReference>
<dbReference type="InterPro" id="IPR014726">
    <property type="entry name" value="Ribosomal_uL2_dom3"/>
</dbReference>
<dbReference type="InterPro" id="IPR022666">
    <property type="entry name" value="Ribosomal_uL2_RNA-bd_dom"/>
</dbReference>
<dbReference type="InterPro" id="IPR008991">
    <property type="entry name" value="Translation_prot_SH3-like_sf"/>
</dbReference>
<dbReference type="NCBIfam" id="TIGR01171">
    <property type="entry name" value="rplB_bact"/>
    <property type="match status" value="1"/>
</dbReference>
<dbReference type="PANTHER" id="PTHR13691:SF5">
    <property type="entry name" value="LARGE RIBOSOMAL SUBUNIT PROTEIN UL2M"/>
    <property type="match status" value="1"/>
</dbReference>
<dbReference type="PANTHER" id="PTHR13691">
    <property type="entry name" value="RIBOSOMAL PROTEIN L2"/>
    <property type="match status" value="1"/>
</dbReference>
<dbReference type="Pfam" id="PF00181">
    <property type="entry name" value="Ribosomal_L2"/>
    <property type="match status" value="1"/>
</dbReference>
<dbReference type="Pfam" id="PF03947">
    <property type="entry name" value="Ribosomal_L2_C"/>
    <property type="match status" value="1"/>
</dbReference>
<dbReference type="PIRSF" id="PIRSF002158">
    <property type="entry name" value="Ribosomal_L2"/>
    <property type="match status" value="1"/>
</dbReference>
<dbReference type="SMART" id="SM01383">
    <property type="entry name" value="Ribosomal_L2"/>
    <property type="match status" value="1"/>
</dbReference>
<dbReference type="SMART" id="SM01382">
    <property type="entry name" value="Ribosomal_L2_C"/>
    <property type="match status" value="1"/>
</dbReference>
<dbReference type="SUPFAM" id="SSF50249">
    <property type="entry name" value="Nucleic acid-binding proteins"/>
    <property type="match status" value="1"/>
</dbReference>
<dbReference type="SUPFAM" id="SSF50104">
    <property type="entry name" value="Translation proteins SH3-like domain"/>
    <property type="match status" value="1"/>
</dbReference>
<dbReference type="PROSITE" id="PS00467">
    <property type="entry name" value="RIBOSOMAL_L2"/>
    <property type="match status" value="1"/>
</dbReference>
<accession>Q7UN17</accession>
<protein>
    <recommendedName>
        <fullName evidence="1">Large ribosomal subunit protein uL2</fullName>
    </recommendedName>
    <alternativeName>
        <fullName evidence="3">50S ribosomal protein L2</fullName>
    </alternativeName>
</protein>
<gene>
    <name evidence="1" type="primary">rplB</name>
    <name type="ordered locus">RB7837</name>
</gene>
<organism>
    <name type="scientific">Rhodopirellula baltica (strain DSM 10527 / NCIMB 13988 / SH1)</name>
    <dbReference type="NCBI Taxonomy" id="243090"/>
    <lineage>
        <taxon>Bacteria</taxon>
        <taxon>Pseudomonadati</taxon>
        <taxon>Planctomycetota</taxon>
        <taxon>Planctomycetia</taxon>
        <taxon>Pirellulales</taxon>
        <taxon>Pirellulaceae</taxon>
        <taxon>Rhodopirellula</taxon>
    </lineage>
</organism>
<proteinExistence type="inferred from homology"/>
<keyword id="KW-1185">Reference proteome</keyword>
<keyword id="KW-0687">Ribonucleoprotein</keyword>
<keyword id="KW-0689">Ribosomal protein</keyword>
<keyword id="KW-0694">RNA-binding</keyword>
<keyword id="KW-0699">rRNA-binding</keyword>
<feature type="chain" id="PRO_0000129605" description="Large ribosomal subunit protein uL2">
    <location>
        <begin position="1"/>
        <end position="286"/>
    </location>
</feature>
<feature type="region of interest" description="Disordered" evidence="2">
    <location>
        <begin position="22"/>
        <end position="59"/>
    </location>
</feature>
<feature type="region of interest" description="Disordered" evidence="2">
    <location>
        <begin position="215"/>
        <end position="286"/>
    </location>
</feature>
<feature type="compositionally biased region" description="Basic and acidic residues" evidence="2">
    <location>
        <begin position="230"/>
        <end position="240"/>
    </location>
</feature>
<feature type="compositionally biased region" description="Basic residues" evidence="2">
    <location>
        <begin position="255"/>
        <end position="286"/>
    </location>
</feature>
<reference key="1">
    <citation type="journal article" date="2003" name="Proc. Natl. Acad. Sci. U.S.A.">
        <title>Complete genome sequence of the marine planctomycete Pirellula sp. strain 1.</title>
        <authorList>
            <person name="Gloeckner F.O."/>
            <person name="Kube M."/>
            <person name="Bauer M."/>
            <person name="Teeling H."/>
            <person name="Lombardot T."/>
            <person name="Ludwig W."/>
            <person name="Gade D."/>
            <person name="Beck A."/>
            <person name="Borzym K."/>
            <person name="Heitmann K."/>
            <person name="Rabus R."/>
            <person name="Schlesner H."/>
            <person name="Amann R."/>
            <person name="Reinhardt R."/>
        </authorList>
    </citation>
    <scope>NUCLEOTIDE SEQUENCE [LARGE SCALE GENOMIC DNA]</scope>
    <source>
        <strain>DSM 10527 / NCIMB 13988 / SH1</strain>
    </source>
</reference>
<comment type="function">
    <text evidence="1">One of the primary rRNA binding proteins. Required for association of the 30S and 50S subunits to form the 70S ribosome, for tRNA binding and peptide bond formation. It has been suggested to have peptidyltransferase activity; this is somewhat controversial. Makes several contacts with the 16S rRNA in the 70S ribosome.</text>
</comment>
<comment type="subunit">
    <text evidence="1">Part of the 50S ribosomal subunit. Forms a bridge to the 30S subunit in the 70S ribosome.</text>
</comment>
<comment type="similarity">
    <text evidence="1">Belongs to the universal ribosomal protein uL2 family.</text>
</comment>
<name>RL2_RHOBA</name>
<evidence type="ECO:0000255" key="1">
    <source>
        <dbReference type="HAMAP-Rule" id="MF_01320"/>
    </source>
</evidence>
<evidence type="ECO:0000256" key="2">
    <source>
        <dbReference type="SAM" id="MobiDB-lite"/>
    </source>
</evidence>
<evidence type="ECO:0000305" key="3"/>
<sequence length="286" mass="31109">MGIRIYKPTSAGRRNASVSDFKELTPGYTPERSLLRPKTKTGGRNNQGKITSRHRGGGHKQKYRVIDFRRVKDGVVATVDSVQYDPNRTARIALLKYPDGEKHYVIAPSGVAAGDKLQNGPDAPPVVGNCLPLKNIPLGTSVCCIEMRAGRGAVMCRSAGTQATLQAREADWAQLLLPSGEVRRVPSACRATIGQVGNSDHMNIVLGKAGRSRWLGRRPHVRGTAMNPIDHPHGGGEGRTKGGRHPVSPSGKSAKGGRTRQKRKPSNSSIVRRRKSRRYGQLKLHK</sequence>